<comment type="function">
    <text evidence="1">Catalyzes the NADPH-dependent reduction of beta-ketoacyl-ACP substrates to beta-hydroxyacyl-ACP products, the first reductive step in the elongation cycle of fatty acid biosynthesis.</text>
</comment>
<comment type="catalytic activity">
    <reaction>
        <text>a (3R)-hydroxyacyl-[ACP] + NADP(+) = a 3-oxoacyl-[ACP] + NADPH + H(+)</text>
        <dbReference type="Rhea" id="RHEA:17397"/>
        <dbReference type="Rhea" id="RHEA-COMP:9916"/>
        <dbReference type="Rhea" id="RHEA-COMP:9945"/>
        <dbReference type="ChEBI" id="CHEBI:15378"/>
        <dbReference type="ChEBI" id="CHEBI:57783"/>
        <dbReference type="ChEBI" id="CHEBI:58349"/>
        <dbReference type="ChEBI" id="CHEBI:78776"/>
        <dbReference type="ChEBI" id="CHEBI:78827"/>
        <dbReference type="EC" id="1.1.1.100"/>
    </reaction>
</comment>
<comment type="pathway">
    <text>Lipid metabolism; fatty acid biosynthesis.</text>
</comment>
<comment type="subunit">
    <text evidence="1">Homotetramer.</text>
</comment>
<comment type="miscellaneous">
    <text evidence="1">Calcium ions stabilize the structure, and may inhibit FabG activity by obstructing access to the active site.</text>
</comment>
<comment type="similarity">
    <text evidence="3">Belongs to the short-chain dehydrogenases/reductases (SDR) family.</text>
</comment>
<evidence type="ECO:0000250" key="1"/>
<evidence type="ECO:0000255" key="2">
    <source>
        <dbReference type="PROSITE-ProRule" id="PRU10001"/>
    </source>
</evidence>
<evidence type="ECO:0000305" key="3"/>
<reference key="1">
    <citation type="journal article" date="2000" name="Nature">
        <title>Genome sequence of the endocellular bacterial symbiont of aphids Buchnera sp. APS.</title>
        <authorList>
            <person name="Shigenobu S."/>
            <person name="Watanabe H."/>
            <person name="Hattori M."/>
            <person name="Sakaki Y."/>
            <person name="Ishikawa H."/>
        </authorList>
    </citation>
    <scope>NUCLEOTIDE SEQUENCE [LARGE SCALE GENOMIC DNA]</scope>
    <source>
        <strain>APS</strain>
    </source>
</reference>
<organism>
    <name type="scientific">Buchnera aphidicola subsp. Acyrthosiphon pisum (strain APS)</name>
    <name type="common">Acyrthosiphon pisum symbiotic bacterium</name>
    <dbReference type="NCBI Taxonomy" id="107806"/>
    <lineage>
        <taxon>Bacteria</taxon>
        <taxon>Pseudomonadati</taxon>
        <taxon>Pseudomonadota</taxon>
        <taxon>Gammaproteobacteria</taxon>
        <taxon>Enterobacterales</taxon>
        <taxon>Erwiniaceae</taxon>
        <taxon>Buchnera</taxon>
    </lineage>
</organism>
<feature type="chain" id="PRO_0000054666" description="3-oxoacyl-[acyl-carrier-protein] reductase FabG">
    <location>
        <begin position="1"/>
        <end position="244"/>
    </location>
</feature>
<feature type="active site" description="Proton acceptor" evidence="2">
    <location>
        <position position="151"/>
    </location>
</feature>
<feature type="binding site" evidence="1">
    <location>
        <begin position="12"/>
        <end position="15"/>
    </location>
    <ligand>
        <name>NADP(+)</name>
        <dbReference type="ChEBI" id="CHEBI:58349"/>
    </ligand>
</feature>
<feature type="binding site" evidence="1">
    <location>
        <position position="37"/>
    </location>
    <ligand>
        <name>NADP(+)</name>
        <dbReference type="ChEBI" id="CHEBI:58349"/>
    </ligand>
</feature>
<feature type="binding site" evidence="1">
    <location>
        <position position="50"/>
    </location>
    <ligand>
        <name>Ca(2+)</name>
        <dbReference type="ChEBI" id="CHEBI:29108"/>
        <label>1</label>
        <note>ligand shared between dimeric partners</note>
    </ligand>
</feature>
<feature type="binding site" evidence="1">
    <location>
        <position position="53"/>
    </location>
    <ligand>
        <name>Ca(2+)</name>
        <dbReference type="ChEBI" id="CHEBI:29108"/>
        <label>1</label>
        <note>ligand shared between dimeric partners</note>
    </ligand>
</feature>
<feature type="binding site" evidence="1">
    <location>
        <begin position="59"/>
        <end position="60"/>
    </location>
    <ligand>
        <name>NADP(+)</name>
        <dbReference type="ChEBI" id="CHEBI:58349"/>
    </ligand>
</feature>
<feature type="binding site" evidence="1">
    <location>
        <position position="86"/>
    </location>
    <ligand>
        <name>NADP(+)</name>
        <dbReference type="ChEBI" id="CHEBI:58349"/>
    </ligand>
</feature>
<feature type="binding site" evidence="1">
    <location>
        <position position="138"/>
    </location>
    <ligand>
        <name>substrate</name>
    </ligand>
</feature>
<feature type="binding site" evidence="1">
    <location>
        <position position="145"/>
    </location>
    <ligand>
        <name>Ca(2+)</name>
        <dbReference type="ChEBI" id="CHEBI:29108"/>
        <label>2</label>
    </ligand>
</feature>
<feature type="binding site" evidence="1">
    <location>
        <begin position="151"/>
        <end position="155"/>
    </location>
    <ligand>
        <name>NADP(+)</name>
        <dbReference type="ChEBI" id="CHEBI:58349"/>
    </ligand>
</feature>
<feature type="binding site" evidence="1">
    <location>
        <position position="184"/>
    </location>
    <ligand>
        <name>NADP(+)</name>
        <dbReference type="ChEBI" id="CHEBI:58349"/>
    </ligand>
</feature>
<feature type="binding site" evidence="1">
    <location>
        <position position="234"/>
    </location>
    <ligand>
        <name>Ca(2+)</name>
        <dbReference type="ChEBI" id="CHEBI:29108"/>
        <label>3</label>
        <note>ligand shared between dimeric partners</note>
    </ligand>
</feature>
<protein>
    <recommendedName>
        <fullName>3-oxoacyl-[acyl-carrier-protein] reductase FabG</fullName>
        <ecNumber>1.1.1.100</ecNumber>
    </recommendedName>
    <alternativeName>
        <fullName>3-ketoacyl-acyl carrier protein reductase</fullName>
    </alternativeName>
    <alternativeName>
        <fullName>Beta-Ketoacyl-acyl carrier protein reductase</fullName>
    </alternativeName>
    <alternativeName>
        <fullName>Beta-ketoacyl-ACP reductase</fullName>
    </alternativeName>
</protein>
<proteinExistence type="inferred from homology"/>
<name>FABG_BUCAI</name>
<sequence length="244" mass="26894">MNINRQTAFITGANQGIGKAIAKKLIKKGIQVIGTSTTEDGVKRINDYLEGNGFGFVLNLKNIDSITEKIQEIYKKKHSIDILINNAGIKEDNLLVNMKSTEWDDVIKTNLSSVFHLVKSVIRSMIKKRQGRIITIGSVIAYTGNKGQVNYSASKSGLIGFHKSLALEVASKGITVNIVSPGLIKTNFTEKLNSIQYQKYLSNIPMKRFGQKEEVADAVIFLASKKASYITGHTLHVNGGMYMI</sequence>
<accession>P57432</accession>
<dbReference type="EC" id="1.1.1.100"/>
<dbReference type="EMBL" id="BA000003">
    <property type="protein sequence ID" value="BAB13055.1"/>
    <property type="molecule type" value="Genomic_DNA"/>
</dbReference>
<dbReference type="RefSeq" id="NP_240169.1">
    <property type="nucleotide sequence ID" value="NC_002528.1"/>
</dbReference>
<dbReference type="RefSeq" id="WP_009874307.1">
    <property type="nucleotide sequence ID" value="NZ_AP036055.1"/>
</dbReference>
<dbReference type="SMR" id="P57432"/>
<dbReference type="STRING" id="563178.BUAP5A_344"/>
<dbReference type="EnsemblBacteria" id="BAB13055">
    <property type="protein sequence ID" value="BAB13055"/>
    <property type="gene ID" value="BAB13055"/>
</dbReference>
<dbReference type="KEGG" id="buc:BU351"/>
<dbReference type="PATRIC" id="fig|107806.10.peg.364"/>
<dbReference type="eggNOG" id="COG1028">
    <property type="taxonomic scope" value="Bacteria"/>
</dbReference>
<dbReference type="HOGENOM" id="CLU_010194_1_3_6"/>
<dbReference type="UniPathway" id="UPA00094"/>
<dbReference type="Proteomes" id="UP000001806">
    <property type="component" value="Chromosome"/>
</dbReference>
<dbReference type="GO" id="GO:0004316">
    <property type="term" value="F:3-oxoacyl-[acyl-carrier-protein] reductase (NADPH) activity"/>
    <property type="evidence" value="ECO:0007669"/>
    <property type="project" value="UniProtKB-EC"/>
</dbReference>
<dbReference type="GO" id="GO:0046872">
    <property type="term" value="F:metal ion binding"/>
    <property type="evidence" value="ECO:0007669"/>
    <property type="project" value="UniProtKB-KW"/>
</dbReference>
<dbReference type="GO" id="GO:0051287">
    <property type="term" value="F:NAD binding"/>
    <property type="evidence" value="ECO:0007669"/>
    <property type="project" value="InterPro"/>
</dbReference>
<dbReference type="GO" id="GO:0006633">
    <property type="term" value="P:fatty acid biosynthetic process"/>
    <property type="evidence" value="ECO:0007669"/>
    <property type="project" value="UniProtKB-UniPathway"/>
</dbReference>
<dbReference type="FunFam" id="3.40.50.720:FF:000173">
    <property type="entry name" value="3-oxoacyl-[acyl-carrier protein] reductase"/>
    <property type="match status" value="1"/>
</dbReference>
<dbReference type="Gene3D" id="3.40.50.720">
    <property type="entry name" value="NAD(P)-binding Rossmann-like Domain"/>
    <property type="match status" value="1"/>
</dbReference>
<dbReference type="InterPro" id="IPR011284">
    <property type="entry name" value="3oxo_ACP_reduc"/>
</dbReference>
<dbReference type="InterPro" id="IPR036291">
    <property type="entry name" value="NAD(P)-bd_dom_sf"/>
</dbReference>
<dbReference type="InterPro" id="IPR020904">
    <property type="entry name" value="Sc_DH/Rdtase_CS"/>
</dbReference>
<dbReference type="InterPro" id="IPR050259">
    <property type="entry name" value="SDR"/>
</dbReference>
<dbReference type="InterPro" id="IPR002347">
    <property type="entry name" value="SDR_fam"/>
</dbReference>
<dbReference type="NCBIfam" id="TIGR01830">
    <property type="entry name" value="3oxo_ACP_reduc"/>
    <property type="match status" value="1"/>
</dbReference>
<dbReference type="NCBIfam" id="NF009466">
    <property type="entry name" value="PRK12826.1-2"/>
    <property type="match status" value="1"/>
</dbReference>
<dbReference type="PANTHER" id="PTHR42879">
    <property type="entry name" value="3-OXOACYL-(ACYL-CARRIER-PROTEIN) REDUCTASE"/>
    <property type="match status" value="1"/>
</dbReference>
<dbReference type="PANTHER" id="PTHR42879:SF2">
    <property type="entry name" value="3-OXOACYL-[ACYL-CARRIER-PROTEIN] REDUCTASE FABG"/>
    <property type="match status" value="1"/>
</dbReference>
<dbReference type="Pfam" id="PF13561">
    <property type="entry name" value="adh_short_C2"/>
    <property type="match status" value="1"/>
</dbReference>
<dbReference type="PRINTS" id="PR00081">
    <property type="entry name" value="GDHRDH"/>
</dbReference>
<dbReference type="PRINTS" id="PR00080">
    <property type="entry name" value="SDRFAMILY"/>
</dbReference>
<dbReference type="SUPFAM" id="SSF51735">
    <property type="entry name" value="NAD(P)-binding Rossmann-fold domains"/>
    <property type="match status" value="1"/>
</dbReference>
<dbReference type="PROSITE" id="PS00061">
    <property type="entry name" value="ADH_SHORT"/>
    <property type="match status" value="1"/>
</dbReference>
<keyword id="KW-0106">Calcium</keyword>
<keyword id="KW-0275">Fatty acid biosynthesis</keyword>
<keyword id="KW-0276">Fatty acid metabolism</keyword>
<keyword id="KW-0444">Lipid biosynthesis</keyword>
<keyword id="KW-0443">Lipid metabolism</keyword>
<keyword id="KW-0479">Metal-binding</keyword>
<keyword id="KW-0521">NADP</keyword>
<keyword id="KW-0560">Oxidoreductase</keyword>
<keyword id="KW-1185">Reference proteome</keyword>
<gene>
    <name type="primary">fabG</name>
    <name type="ordered locus">BU351</name>
</gene>